<protein>
    <recommendedName>
        <fullName evidence="1">Lipoprotein signal peptidase</fullName>
        <ecNumber evidence="1">3.4.23.36</ecNumber>
    </recommendedName>
    <alternativeName>
        <fullName evidence="1">Prolipoprotein signal peptidase</fullName>
    </alternativeName>
    <alternativeName>
        <fullName evidence="1">Signal peptidase II</fullName>
        <shortName evidence="1">SPase II</shortName>
    </alternativeName>
</protein>
<organism>
    <name type="scientific">Leptospira interrogans serogroup Icterohaemorrhagiae serovar Lai (strain 56601)</name>
    <dbReference type="NCBI Taxonomy" id="189518"/>
    <lineage>
        <taxon>Bacteria</taxon>
        <taxon>Pseudomonadati</taxon>
        <taxon>Spirochaetota</taxon>
        <taxon>Spirochaetia</taxon>
        <taxon>Leptospirales</taxon>
        <taxon>Leptospiraceae</taxon>
        <taxon>Leptospira</taxon>
    </lineage>
</organism>
<evidence type="ECO:0000255" key="1">
    <source>
        <dbReference type="HAMAP-Rule" id="MF_00161"/>
    </source>
</evidence>
<keyword id="KW-0064">Aspartyl protease</keyword>
<keyword id="KW-0997">Cell inner membrane</keyword>
<keyword id="KW-1003">Cell membrane</keyword>
<keyword id="KW-0378">Hydrolase</keyword>
<keyword id="KW-0472">Membrane</keyword>
<keyword id="KW-0645">Protease</keyword>
<keyword id="KW-1185">Reference proteome</keyword>
<keyword id="KW-0812">Transmembrane</keyword>
<keyword id="KW-1133">Transmembrane helix</keyword>
<feature type="chain" id="PRO_0000178790" description="Lipoprotein signal peptidase">
    <location>
        <begin position="1"/>
        <end position="182"/>
    </location>
</feature>
<feature type="transmembrane region" description="Helical" evidence="1">
    <location>
        <begin position="15"/>
        <end position="35"/>
    </location>
</feature>
<feature type="transmembrane region" description="Helical" evidence="1">
    <location>
        <begin position="44"/>
        <end position="64"/>
    </location>
</feature>
<feature type="transmembrane region" description="Helical" evidence="1">
    <location>
        <begin position="65"/>
        <end position="85"/>
    </location>
</feature>
<feature type="transmembrane region" description="Helical" evidence="1">
    <location>
        <begin position="97"/>
        <end position="117"/>
    </location>
</feature>
<feature type="transmembrane region" description="Helical" evidence="1">
    <location>
        <begin position="155"/>
        <end position="175"/>
    </location>
</feature>
<feature type="active site" evidence="1">
    <location>
        <position position="140"/>
    </location>
</feature>
<feature type="active site" evidence="1">
    <location>
        <position position="162"/>
    </location>
</feature>
<sequence length="182" mass="21088">MKYFEKRFLDVYRPIYLGVIFLGIVLDLVTKFLVILYFQPHRYLEVFGSFFRMTLTFNTGFVFGAFQDNAIPSLIATGVAIVFLIGYRWKNHDLGNPWGWNLVMAGAFGNFLDKFFVKIPGTGFRFGFQPNMGEYIGVVDFLDFDWPDFLLFSRWPAFNVADSCVTIGLTILIFTMKLEEEK</sequence>
<dbReference type="EC" id="3.4.23.36" evidence="1"/>
<dbReference type="EMBL" id="AE010300">
    <property type="protein sequence ID" value="AAN48535.1"/>
    <property type="molecule type" value="Genomic_DNA"/>
</dbReference>
<dbReference type="RefSeq" id="NP_711517.1">
    <property type="nucleotide sequence ID" value="NC_004342.2"/>
</dbReference>
<dbReference type="RefSeq" id="WP_000873141.1">
    <property type="nucleotide sequence ID" value="NC_004342.2"/>
</dbReference>
<dbReference type="SMR" id="Q8F6H0"/>
<dbReference type="STRING" id="189518.LA_1336"/>
<dbReference type="PaxDb" id="189518-LA_1336"/>
<dbReference type="EnsemblBacteria" id="AAN48535">
    <property type="protein sequence ID" value="AAN48535"/>
    <property type="gene ID" value="LA_1336"/>
</dbReference>
<dbReference type="KEGG" id="lil:LA_1336"/>
<dbReference type="PATRIC" id="fig|189518.3.peg.1334"/>
<dbReference type="HOGENOM" id="CLU_083252_3_1_12"/>
<dbReference type="InParanoid" id="Q8F6H0"/>
<dbReference type="OrthoDB" id="9810259at2"/>
<dbReference type="UniPathway" id="UPA00665"/>
<dbReference type="Proteomes" id="UP000001408">
    <property type="component" value="Chromosome I"/>
</dbReference>
<dbReference type="GO" id="GO:0005886">
    <property type="term" value="C:plasma membrane"/>
    <property type="evidence" value="ECO:0000318"/>
    <property type="project" value="GO_Central"/>
</dbReference>
<dbReference type="GO" id="GO:0004190">
    <property type="term" value="F:aspartic-type endopeptidase activity"/>
    <property type="evidence" value="ECO:0007669"/>
    <property type="project" value="UniProtKB-UniRule"/>
</dbReference>
<dbReference type="GO" id="GO:0004175">
    <property type="term" value="F:endopeptidase activity"/>
    <property type="evidence" value="ECO:0000318"/>
    <property type="project" value="GO_Central"/>
</dbReference>
<dbReference type="GO" id="GO:0006508">
    <property type="term" value="P:proteolysis"/>
    <property type="evidence" value="ECO:0007669"/>
    <property type="project" value="UniProtKB-KW"/>
</dbReference>
<dbReference type="HAMAP" id="MF_00161">
    <property type="entry name" value="LspA"/>
    <property type="match status" value="1"/>
</dbReference>
<dbReference type="InterPro" id="IPR001872">
    <property type="entry name" value="Peptidase_A8"/>
</dbReference>
<dbReference type="NCBIfam" id="NF011364">
    <property type="entry name" value="PRK14783.1"/>
    <property type="match status" value="1"/>
</dbReference>
<dbReference type="PANTHER" id="PTHR33695">
    <property type="entry name" value="LIPOPROTEIN SIGNAL PEPTIDASE"/>
    <property type="match status" value="1"/>
</dbReference>
<dbReference type="PANTHER" id="PTHR33695:SF1">
    <property type="entry name" value="LIPOPROTEIN SIGNAL PEPTIDASE"/>
    <property type="match status" value="1"/>
</dbReference>
<dbReference type="Pfam" id="PF01252">
    <property type="entry name" value="Peptidase_A8"/>
    <property type="match status" value="1"/>
</dbReference>
<dbReference type="PRINTS" id="PR00781">
    <property type="entry name" value="LIPOSIGPTASE"/>
</dbReference>
<dbReference type="PROSITE" id="PS00855">
    <property type="entry name" value="SPASE_II"/>
    <property type="match status" value="1"/>
</dbReference>
<reference key="1">
    <citation type="journal article" date="2003" name="Nature">
        <title>Unique physiological and pathogenic features of Leptospira interrogans revealed by whole-genome sequencing.</title>
        <authorList>
            <person name="Ren S.-X."/>
            <person name="Fu G."/>
            <person name="Jiang X.-G."/>
            <person name="Zeng R."/>
            <person name="Miao Y.-G."/>
            <person name="Xu H."/>
            <person name="Zhang Y.-X."/>
            <person name="Xiong H."/>
            <person name="Lu G."/>
            <person name="Lu L.-F."/>
            <person name="Jiang H.-Q."/>
            <person name="Jia J."/>
            <person name="Tu Y.-F."/>
            <person name="Jiang J.-X."/>
            <person name="Gu W.-Y."/>
            <person name="Zhang Y.-Q."/>
            <person name="Cai Z."/>
            <person name="Sheng H.-H."/>
            <person name="Yin H.-F."/>
            <person name="Zhang Y."/>
            <person name="Zhu G.-F."/>
            <person name="Wan M."/>
            <person name="Huang H.-L."/>
            <person name="Qian Z."/>
            <person name="Wang S.-Y."/>
            <person name="Ma W."/>
            <person name="Yao Z.-J."/>
            <person name="Shen Y."/>
            <person name="Qiang B.-Q."/>
            <person name="Xia Q.-C."/>
            <person name="Guo X.-K."/>
            <person name="Danchin A."/>
            <person name="Saint Girons I."/>
            <person name="Somerville R.L."/>
            <person name="Wen Y.-M."/>
            <person name="Shi M.-H."/>
            <person name="Chen Z."/>
            <person name="Xu J.-G."/>
            <person name="Zhao G.-P."/>
        </authorList>
    </citation>
    <scope>NUCLEOTIDE SEQUENCE [LARGE SCALE GENOMIC DNA]</scope>
    <source>
        <strain>56601</strain>
    </source>
</reference>
<gene>
    <name evidence="1" type="primary">lspA</name>
    <name type="ordered locus">LA_1336</name>
</gene>
<accession>Q8F6H0</accession>
<comment type="function">
    <text evidence="1">This protein specifically catalyzes the removal of signal peptides from prolipoproteins.</text>
</comment>
<comment type="catalytic activity">
    <reaction evidence="1">
        <text>Release of signal peptides from bacterial membrane prolipoproteins. Hydrolyzes -Xaa-Yaa-Zaa-|-(S,diacylglyceryl)Cys-, in which Xaa is hydrophobic (preferably Leu), and Yaa (Ala or Ser) and Zaa (Gly or Ala) have small, neutral side chains.</text>
        <dbReference type="EC" id="3.4.23.36"/>
    </reaction>
</comment>
<comment type="pathway">
    <text evidence="1">Protein modification; lipoprotein biosynthesis (signal peptide cleavage).</text>
</comment>
<comment type="subcellular location">
    <subcellularLocation>
        <location evidence="1">Cell inner membrane</location>
        <topology evidence="1">Multi-pass membrane protein</topology>
    </subcellularLocation>
</comment>
<comment type="similarity">
    <text evidence="1">Belongs to the peptidase A8 family.</text>
</comment>
<proteinExistence type="inferred from homology"/>
<name>LSPA_LEPIN</name>